<keyword id="KW-0067">ATP-binding</keyword>
<keyword id="KW-0414">Isoprene biosynthesis</keyword>
<keyword id="KW-0418">Kinase</keyword>
<keyword id="KW-0547">Nucleotide-binding</keyword>
<keyword id="KW-1185">Reference proteome</keyword>
<keyword id="KW-0808">Transferase</keyword>
<feature type="chain" id="PRO_0000235070" description="4-diphosphocytidyl-2-C-methyl-D-erythritol kinase">
    <location>
        <begin position="1"/>
        <end position="295"/>
    </location>
</feature>
<feature type="active site" evidence="1">
    <location>
        <position position="10"/>
    </location>
</feature>
<feature type="active site" evidence="1">
    <location>
        <position position="139"/>
    </location>
</feature>
<feature type="binding site" evidence="1">
    <location>
        <begin position="97"/>
        <end position="107"/>
    </location>
    <ligand>
        <name>ATP</name>
        <dbReference type="ChEBI" id="CHEBI:30616"/>
    </ligand>
</feature>
<comment type="function">
    <text evidence="1">Catalyzes the phosphorylation of the position 2 hydroxy group of 4-diphosphocytidyl-2C-methyl-D-erythritol.</text>
</comment>
<comment type="catalytic activity">
    <reaction evidence="1">
        <text>4-CDP-2-C-methyl-D-erythritol + ATP = 4-CDP-2-C-methyl-D-erythritol 2-phosphate + ADP + H(+)</text>
        <dbReference type="Rhea" id="RHEA:18437"/>
        <dbReference type="ChEBI" id="CHEBI:15378"/>
        <dbReference type="ChEBI" id="CHEBI:30616"/>
        <dbReference type="ChEBI" id="CHEBI:57823"/>
        <dbReference type="ChEBI" id="CHEBI:57919"/>
        <dbReference type="ChEBI" id="CHEBI:456216"/>
        <dbReference type="EC" id="2.7.1.148"/>
    </reaction>
</comment>
<comment type="pathway">
    <text evidence="1">Isoprenoid biosynthesis; isopentenyl diphosphate biosynthesis via DXP pathway; isopentenyl diphosphate from 1-deoxy-D-xylulose 5-phosphate: step 3/6.</text>
</comment>
<comment type="subunit">
    <text evidence="1">Homodimer.</text>
</comment>
<comment type="similarity">
    <text evidence="1">Belongs to the GHMP kinase family. IspE subfamily.</text>
</comment>
<evidence type="ECO:0000255" key="1">
    <source>
        <dbReference type="HAMAP-Rule" id="MF_00061"/>
    </source>
</evidence>
<reference key="1">
    <citation type="journal article" date="2005" name="Genome Res.">
        <title>Genome sequence of Blochmannia pennsylvanicus indicates parallel evolutionary trends among bacterial mutualists of insects.</title>
        <authorList>
            <person name="Degnan P.H."/>
            <person name="Lazarus A.B."/>
            <person name="Wernegreen J.J."/>
        </authorList>
    </citation>
    <scope>NUCLEOTIDE SEQUENCE [LARGE SCALE GENOMIC DNA]</scope>
    <source>
        <strain>BPEN</strain>
    </source>
</reference>
<sequence>MNYQWPSPGKLNLFLYVTGCRADGYHYLQTLFQLIEYGDTIKIFVTNNGRIRLFTIMNDLVCRDNLIIRAAKLLQYYCWPNKKPVFGADIFLDKILPIGSGLGGASSNAATVLMVLNQQWRCYLNKHVLMHLGLMLGADVPFFLYGRSAFAEGIGNILIPVFVPKKWYLILIPPVRISTFWGFQMYELENHCYSPFRSMRELLSVSFHNDFEEIIKKISPEIKIFFACLSQFALARLTGTGSCIFAEFKTEQLAYQVQSYLPSWVSSIITRGINLSPLHQKLLKCTAYSSIIFLS</sequence>
<organism>
    <name type="scientific">Blochmanniella pennsylvanica (strain BPEN)</name>
    <dbReference type="NCBI Taxonomy" id="291272"/>
    <lineage>
        <taxon>Bacteria</taxon>
        <taxon>Pseudomonadati</taxon>
        <taxon>Pseudomonadota</taxon>
        <taxon>Gammaproteobacteria</taxon>
        <taxon>Enterobacterales</taxon>
        <taxon>Enterobacteriaceae</taxon>
        <taxon>ant endosymbionts</taxon>
        <taxon>Candidatus Blochmanniella</taxon>
    </lineage>
</organism>
<proteinExistence type="inferred from homology"/>
<name>ISPE_BLOPB</name>
<gene>
    <name evidence="1" type="primary">ispE</name>
    <name type="ordered locus">BPEN_357</name>
</gene>
<protein>
    <recommendedName>
        <fullName evidence="1">4-diphosphocytidyl-2-C-methyl-D-erythritol kinase</fullName>
        <shortName evidence="1">CMK</shortName>
        <ecNumber evidence="1">2.7.1.148</ecNumber>
    </recommendedName>
    <alternativeName>
        <fullName evidence="1">4-(cytidine-5'-diphospho)-2-C-methyl-D-erythritol kinase</fullName>
    </alternativeName>
</protein>
<accession>Q492W0</accession>
<dbReference type="EC" id="2.7.1.148" evidence="1"/>
<dbReference type="EMBL" id="CP000016">
    <property type="protein sequence ID" value="AAZ40982.1"/>
    <property type="molecule type" value="Genomic_DNA"/>
</dbReference>
<dbReference type="RefSeq" id="WP_011282891.1">
    <property type="nucleotide sequence ID" value="NC_007292.1"/>
</dbReference>
<dbReference type="SMR" id="Q492W0"/>
<dbReference type="STRING" id="291272.BPEN_357"/>
<dbReference type="KEGG" id="bpn:BPEN_357"/>
<dbReference type="eggNOG" id="COG1947">
    <property type="taxonomic scope" value="Bacteria"/>
</dbReference>
<dbReference type="HOGENOM" id="CLU_053057_3_0_6"/>
<dbReference type="OrthoDB" id="9809438at2"/>
<dbReference type="UniPathway" id="UPA00056">
    <property type="reaction ID" value="UER00094"/>
</dbReference>
<dbReference type="Proteomes" id="UP000007794">
    <property type="component" value="Chromosome"/>
</dbReference>
<dbReference type="GO" id="GO:0050515">
    <property type="term" value="F:4-(cytidine 5'-diphospho)-2-C-methyl-D-erythritol kinase activity"/>
    <property type="evidence" value="ECO:0007669"/>
    <property type="project" value="UniProtKB-UniRule"/>
</dbReference>
<dbReference type="GO" id="GO:0005524">
    <property type="term" value="F:ATP binding"/>
    <property type="evidence" value="ECO:0007669"/>
    <property type="project" value="UniProtKB-UniRule"/>
</dbReference>
<dbReference type="GO" id="GO:0019288">
    <property type="term" value="P:isopentenyl diphosphate biosynthetic process, methylerythritol 4-phosphate pathway"/>
    <property type="evidence" value="ECO:0007669"/>
    <property type="project" value="UniProtKB-UniRule"/>
</dbReference>
<dbReference type="GO" id="GO:0016114">
    <property type="term" value="P:terpenoid biosynthetic process"/>
    <property type="evidence" value="ECO:0007669"/>
    <property type="project" value="InterPro"/>
</dbReference>
<dbReference type="Gene3D" id="3.30.230.10">
    <property type="match status" value="1"/>
</dbReference>
<dbReference type="Gene3D" id="3.30.70.890">
    <property type="entry name" value="GHMP kinase, C-terminal domain"/>
    <property type="match status" value="1"/>
</dbReference>
<dbReference type="HAMAP" id="MF_00061">
    <property type="entry name" value="IspE"/>
    <property type="match status" value="1"/>
</dbReference>
<dbReference type="InterPro" id="IPR013750">
    <property type="entry name" value="GHMP_kinase_C_dom"/>
</dbReference>
<dbReference type="InterPro" id="IPR036554">
    <property type="entry name" value="GHMP_kinase_C_sf"/>
</dbReference>
<dbReference type="InterPro" id="IPR006204">
    <property type="entry name" value="GHMP_kinase_N_dom"/>
</dbReference>
<dbReference type="InterPro" id="IPR004424">
    <property type="entry name" value="IspE"/>
</dbReference>
<dbReference type="InterPro" id="IPR020568">
    <property type="entry name" value="Ribosomal_Su5_D2-typ_SF"/>
</dbReference>
<dbReference type="InterPro" id="IPR014721">
    <property type="entry name" value="Ribsml_uS5_D2-typ_fold_subgr"/>
</dbReference>
<dbReference type="NCBIfam" id="TIGR00154">
    <property type="entry name" value="ispE"/>
    <property type="match status" value="1"/>
</dbReference>
<dbReference type="PANTHER" id="PTHR43527">
    <property type="entry name" value="4-DIPHOSPHOCYTIDYL-2-C-METHYL-D-ERYTHRITOL KINASE, CHLOROPLASTIC"/>
    <property type="match status" value="1"/>
</dbReference>
<dbReference type="PANTHER" id="PTHR43527:SF2">
    <property type="entry name" value="4-DIPHOSPHOCYTIDYL-2-C-METHYL-D-ERYTHRITOL KINASE, CHLOROPLASTIC"/>
    <property type="match status" value="1"/>
</dbReference>
<dbReference type="Pfam" id="PF08544">
    <property type="entry name" value="GHMP_kinases_C"/>
    <property type="match status" value="1"/>
</dbReference>
<dbReference type="Pfam" id="PF00288">
    <property type="entry name" value="GHMP_kinases_N"/>
    <property type="match status" value="1"/>
</dbReference>
<dbReference type="PIRSF" id="PIRSF010376">
    <property type="entry name" value="IspE"/>
    <property type="match status" value="1"/>
</dbReference>
<dbReference type="SUPFAM" id="SSF55060">
    <property type="entry name" value="GHMP Kinase, C-terminal domain"/>
    <property type="match status" value="1"/>
</dbReference>
<dbReference type="SUPFAM" id="SSF54211">
    <property type="entry name" value="Ribosomal protein S5 domain 2-like"/>
    <property type="match status" value="1"/>
</dbReference>